<keyword id="KW-1185">Reference proteome</keyword>
<keyword id="KW-0687">Ribonucleoprotein</keyword>
<keyword id="KW-0689">Ribosomal protein</keyword>
<keyword id="KW-0694">RNA-binding</keyword>
<keyword id="KW-0699">rRNA-binding</keyword>
<name>RL18_CLOTE</name>
<organism>
    <name type="scientific">Clostridium tetani (strain Massachusetts / E88)</name>
    <dbReference type="NCBI Taxonomy" id="212717"/>
    <lineage>
        <taxon>Bacteria</taxon>
        <taxon>Bacillati</taxon>
        <taxon>Bacillota</taxon>
        <taxon>Clostridia</taxon>
        <taxon>Eubacteriales</taxon>
        <taxon>Clostridiaceae</taxon>
        <taxon>Clostridium</taxon>
    </lineage>
</organism>
<reference key="1">
    <citation type="journal article" date="2003" name="Proc. Natl. Acad. Sci. U.S.A.">
        <title>The genome sequence of Clostridium tetani, the causative agent of tetanus disease.</title>
        <authorList>
            <person name="Brueggemann H."/>
            <person name="Baeumer S."/>
            <person name="Fricke W.F."/>
            <person name="Wiezer A."/>
            <person name="Liesegang H."/>
            <person name="Decker I."/>
            <person name="Herzberg C."/>
            <person name="Martinez-Arias R."/>
            <person name="Merkl R."/>
            <person name="Henne A."/>
            <person name="Gottschalk G."/>
        </authorList>
    </citation>
    <scope>NUCLEOTIDE SEQUENCE [LARGE SCALE GENOMIC DNA]</scope>
    <source>
        <strain>Massachusetts / E88</strain>
    </source>
</reference>
<gene>
    <name evidence="1" type="primary">rplR</name>
    <name type="ordered locus">CTC_02587</name>
</gene>
<accession>Q890Q1</accession>
<proteinExistence type="inferred from homology"/>
<feature type="chain" id="PRO_0000131250" description="Large ribosomal subunit protein uL18">
    <location>
        <begin position="1"/>
        <end position="119"/>
    </location>
</feature>
<evidence type="ECO:0000255" key="1">
    <source>
        <dbReference type="HAMAP-Rule" id="MF_01337"/>
    </source>
</evidence>
<evidence type="ECO:0000305" key="2"/>
<comment type="function">
    <text evidence="1">This is one of the proteins that bind and probably mediate the attachment of the 5S RNA into the large ribosomal subunit, where it forms part of the central protuberance.</text>
</comment>
<comment type="subunit">
    <text evidence="1">Part of the 50S ribosomal subunit; part of the 5S rRNA/L5/L18/L25 subcomplex. Contacts the 5S and 23S rRNAs.</text>
</comment>
<comment type="similarity">
    <text evidence="1">Belongs to the universal ribosomal protein uL18 family.</text>
</comment>
<protein>
    <recommendedName>
        <fullName evidence="1">Large ribosomal subunit protein uL18</fullName>
    </recommendedName>
    <alternativeName>
        <fullName evidence="2">50S ribosomal protein L18</fullName>
    </alternativeName>
</protein>
<dbReference type="EMBL" id="AE015927">
    <property type="protein sequence ID" value="AAO37044.1"/>
    <property type="molecule type" value="Genomic_DNA"/>
</dbReference>
<dbReference type="RefSeq" id="WP_011100705.1">
    <property type="nucleotide sequence ID" value="NC_004557.1"/>
</dbReference>
<dbReference type="SMR" id="Q890Q1"/>
<dbReference type="STRING" id="212717.CTC_02587"/>
<dbReference type="GeneID" id="24254601"/>
<dbReference type="KEGG" id="ctc:CTC_02587"/>
<dbReference type="HOGENOM" id="CLU_098841_0_1_9"/>
<dbReference type="OrthoDB" id="9810939at2"/>
<dbReference type="Proteomes" id="UP000001412">
    <property type="component" value="Chromosome"/>
</dbReference>
<dbReference type="GO" id="GO:0022625">
    <property type="term" value="C:cytosolic large ribosomal subunit"/>
    <property type="evidence" value="ECO:0007669"/>
    <property type="project" value="TreeGrafter"/>
</dbReference>
<dbReference type="GO" id="GO:0008097">
    <property type="term" value="F:5S rRNA binding"/>
    <property type="evidence" value="ECO:0007669"/>
    <property type="project" value="TreeGrafter"/>
</dbReference>
<dbReference type="GO" id="GO:0003735">
    <property type="term" value="F:structural constituent of ribosome"/>
    <property type="evidence" value="ECO:0007669"/>
    <property type="project" value="InterPro"/>
</dbReference>
<dbReference type="GO" id="GO:0006412">
    <property type="term" value="P:translation"/>
    <property type="evidence" value="ECO:0007669"/>
    <property type="project" value="UniProtKB-UniRule"/>
</dbReference>
<dbReference type="CDD" id="cd00432">
    <property type="entry name" value="Ribosomal_L18_L5e"/>
    <property type="match status" value="1"/>
</dbReference>
<dbReference type="FunFam" id="3.30.420.100:FF:000001">
    <property type="entry name" value="50S ribosomal protein L18"/>
    <property type="match status" value="1"/>
</dbReference>
<dbReference type="Gene3D" id="3.30.420.100">
    <property type="match status" value="1"/>
</dbReference>
<dbReference type="HAMAP" id="MF_01337_B">
    <property type="entry name" value="Ribosomal_uL18_B"/>
    <property type="match status" value="1"/>
</dbReference>
<dbReference type="InterPro" id="IPR004389">
    <property type="entry name" value="Ribosomal_uL18_bac-type"/>
</dbReference>
<dbReference type="InterPro" id="IPR005484">
    <property type="entry name" value="Ribosomal_uL18_bac/euk"/>
</dbReference>
<dbReference type="NCBIfam" id="TIGR00060">
    <property type="entry name" value="L18_bact"/>
    <property type="match status" value="1"/>
</dbReference>
<dbReference type="PANTHER" id="PTHR12899">
    <property type="entry name" value="39S RIBOSOMAL PROTEIN L18, MITOCHONDRIAL"/>
    <property type="match status" value="1"/>
</dbReference>
<dbReference type="PANTHER" id="PTHR12899:SF3">
    <property type="entry name" value="LARGE RIBOSOMAL SUBUNIT PROTEIN UL18M"/>
    <property type="match status" value="1"/>
</dbReference>
<dbReference type="Pfam" id="PF00861">
    <property type="entry name" value="Ribosomal_L18p"/>
    <property type="match status" value="1"/>
</dbReference>
<dbReference type="SUPFAM" id="SSF53137">
    <property type="entry name" value="Translational machinery components"/>
    <property type="match status" value="1"/>
</dbReference>
<sequence>MFKKQSRQKGREKRHLRIRKNIFGTPEMPRLSVYRSEKNIYAQIIDDLNGVTLVAASSLDKEFDAKGSNKDGAKLVGELVAKRAIEKGVTKVVFDRGGYIYHGRVQELAEGAREAGLQF</sequence>